<reference key="1">
    <citation type="journal article" date="2005" name="Science">
        <title>Genome streamlining in a cosmopolitan oceanic bacterium.</title>
        <authorList>
            <person name="Giovannoni S.J."/>
            <person name="Tripp H.J."/>
            <person name="Givan S."/>
            <person name="Podar M."/>
            <person name="Vergin K.L."/>
            <person name="Baptista D."/>
            <person name="Bibbs L."/>
            <person name="Eads J."/>
            <person name="Richardson T.H."/>
            <person name="Noordewier M."/>
            <person name="Rappe M.S."/>
            <person name="Short J.M."/>
            <person name="Carrington J.C."/>
            <person name="Mathur E.J."/>
        </authorList>
    </citation>
    <scope>NUCLEOTIDE SEQUENCE [LARGE SCALE GENOMIC DNA]</scope>
    <source>
        <strain>HTCC1062</strain>
    </source>
</reference>
<evidence type="ECO:0000255" key="1">
    <source>
        <dbReference type="HAMAP-Rule" id="MF_01690"/>
    </source>
</evidence>
<keyword id="KW-0028">Amino-acid biosynthesis</keyword>
<keyword id="KW-0170">Cobalt</keyword>
<keyword id="KW-0220">Diaminopimelate biosynthesis</keyword>
<keyword id="KW-0378">Hydrolase</keyword>
<keyword id="KW-0457">Lysine biosynthesis</keyword>
<keyword id="KW-0479">Metal-binding</keyword>
<keyword id="KW-1185">Reference proteome</keyword>
<keyword id="KW-0862">Zinc</keyword>
<proteinExistence type="inferred from homology"/>
<organism>
    <name type="scientific">Pelagibacter ubique (strain HTCC1062)</name>
    <dbReference type="NCBI Taxonomy" id="335992"/>
    <lineage>
        <taxon>Bacteria</taxon>
        <taxon>Pseudomonadati</taxon>
        <taxon>Pseudomonadota</taxon>
        <taxon>Alphaproteobacteria</taxon>
        <taxon>Candidatus Pelagibacterales</taxon>
        <taxon>Candidatus Pelagibacteraceae</taxon>
        <taxon>Candidatus Pelagibacter</taxon>
    </lineage>
</organism>
<protein>
    <recommendedName>
        <fullName evidence="1">Succinyl-diaminopimelate desuccinylase</fullName>
        <shortName evidence="1">SDAP desuccinylase</shortName>
        <ecNumber evidence="1">3.5.1.18</ecNumber>
    </recommendedName>
    <alternativeName>
        <fullName evidence="1">N-succinyl-LL-2,6-diaminoheptanedioate amidohydrolase</fullName>
    </alternativeName>
</protein>
<feature type="chain" id="PRO_0000375642" description="Succinyl-diaminopimelate desuccinylase">
    <location>
        <begin position="1"/>
        <end position="384"/>
    </location>
</feature>
<feature type="active site" evidence="1">
    <location>
        <position position="75"/>
    </location>
</feature>
<feature type="active site" description="Proton acceptor" evidence="1">
    <location>
        <position position="140"/>
    </location>
</feature>
<feature type="binding site" evidence="1">
    <location>
        <position position="73"/>
    </location>
    <ligand>
        <name>Zn(2+)</name>
        <dbReference type="ChEBI" id="CHEBI:29105"/>
        <label>1</label>
    </ligand>
</feature>
<feature type="binding site" evidence="1">
    <location>
        <position position="106"/>
    </location>
    <ligand>
        <name>Zn(2+)</name>
        <dbReference type="ChEBI" id="CHEBI:29105"/>
        <label>1</label>
    </ligand>
</feature>
<feature type="binding site" evidence="1">
    <location>
        <position position="106"/>
    </location>
    <ligand>
        <name>Zn(2+)</name>
        <dbReference type="ChEBI" id="CHEBI:29105"/>
        <label>2</label>
    </ligand>
</feature>
<feature type="binding site" evidence="1">
    <location>
        <position position="141"/>
    </location>
    <ligand>
        <name>Zn(2+)</name>
        <dbReference type="ChEBI" id="CHEBI:29105"/>
        <label>2</label>
    </ligand>
</feature>
<feature type="binding site" evidence="1">
    <location>
        <position position="169"/>
    </location>
    <ligand>
        <name>Zn(2+)</name>
        <dbReference type="ChEBI" id="CHEBI:29105"/>
        <label>1</label>
    </ligand>
</feature>
<feature type="binding site" evidence="1">
    <location>
        <position position="358"/>
    </location>
    <ligand>
        <name>Zn(2+)</name>
        <dbReference type="ChEBI" id="CHEBI:29105"/>
        <label>2</label>
    </ligand>
</feature>
<comment type="function">
    <text evidence="1">Catalyzes the hydrolysis of N-succinyl-L,L-diaminopimelic acid (SDAP), forming succinate and LL-2,6-diaminopimelate (DAP), an intermediate involved in the bacterial biosynthesis of lysine and meso-diaminopimelic acid, an essential component of bacterial cell walls.</text>
</comment>
<comment type="catalytic activity">
    <reaction evidence="1">
        <text>N-succinyl-(2S,6S)-2,6-diaminopimelate + H2O = (2S,6S)-2,6-diaminopimelate + succinate</text>
        <dbReference type="Rhea" id="RHEA:22608"/>
        <dbReference type="ChEBI" id="CHEBI:15377"/>
        <dbReference type="ChEBI" id="CHEBI:30031"/>
        <dbReference type="ChEBI" id="CHEBI:57609"/>
        <dbReference type="ChEBI" id="CHEBI:58087"/>
        <dbReference type="EC" id="3.5.1.18"/>
    </reaction>
</comment>
<comment type="cofactor">
    <cofactor evidence="1">
        <name>Zn(2+)</name>
        <dbReference type="ChEBI" id="CHEBI:29105"/>
    </cofactor>
    <cofactor evidence="1">
        <name>Co(2+)</name>
        <dbReference type="ChEBI" id="CHEBI:48828"/>
    </cofactor>
    <text evidence="1">Binds 2 Zn(2+) or Co(2+) ions per subunit.</text>
</comment>
<comment type="pathway">
    <text evidence="1">Amino-acid biosynthesis; L-lysine biosynthesis via DAP pathway; LL-2,6-diaminopimelate from (S)-tetrahydrodipicolinate (succinylase route): step 3/3.</text>
</comment>
<comment type="subunit">
    <text evidence="1">Homodimer.</text>
</comment>
<comment type="similarity">
    <text evidence="1">Belongs to the peptidase M20A family. DapE subfamily.</text>
</comment>
<dbReference type="EC" id="3.5.1.18" evidence="1"/>
<dbReference type="EMBL" id="CP000084">
    <property type="protein sequence ID" value="AAZ21284.1"/>
    <property type="molecule type" value="Genomic_DNA"/>
</dbReference>
<dbReference type="RefSeq" id="WP_011281729.1">
    <property type="nucleotide sequence ID" value="NC_007205.1"/>
</dbReference>
<dbReference type="SMR" id="Q4FNF5"/>
<dbReference type="STRING" id="335992.SAR11_0462"/>
<dbReference type="GeneID" id="66294961"/>
<dbReference type="KEGG" id="pub:SAR11_0462"/>
<dbReference type="eggNOG" id="COG0624">
    <property type="taxonomic scope" value="Bacteria"/>
</dbReference>
<dbReference type="HOGENOM" id="CLU_021802_4_0_5"/>
<dbReference type="OrthoDB" id="9809784at2"/>
<dbReference type="UniPathway" id="UPA00034">
    <property type="reaction ID" value="UER00021"/>
</dbReference>
<dbReference type="Proteomes" id="UP000002528">
    <property type="component" value="Chromosome"/>
</dbReference>
<dbReference type="GO" id="GO:0008777">
    <property type="term" value="F:acetylornithine deacetylase activity"/>
    <property type="evidence" value="ECO:0007669"/>
    <property type="project" value="TreeGrafter"/>
</dbReference>
<dbReference type="GO" id="GO:0050897">
    <property type="term" value="F:cobalt ion binding"/>
    <property type="evidence" value="ECO:0007669"/>
    <property type="project" value="UniProtKB-UniRule"/>
</dbReference>
<dbReference type="GO" id="GO:0009014">
    <property type="term" value="F:succinyl-diaminopimelate desuccinylase activity"/>
    <property type="evidence" value="ECO:0007669"/>
    <property type="project" value="UniProtKB-UniRule"/>
</dbReference>
<dbReference type="GO" id="GO:0008270">
    <property type="term" value="F:zinc ion binding"/>
    <property type="evidence" value="ECO:0007669"/>
    <property type="project" value="UniProtKB-UniRule"/>
</dbReference>
<dbReference type="GO" id="GO:0019877">
    <property type="term" value="P:diaminopimelate biosynthetic process"/>
    <property type="evidence" value="ECO:0007669"/>
    <property type="project" value="UniProtKB-UniRule"/>
</dbReference>
<dbReference type="GO" id="GO:0006526">
    <property type="term" value="P:L-arginine biosynthetic process"/>
    <property type="evidence" value="ECO:0007669"/>
    <property type="project" value="TreeGrafter"/>
</dbReference>
<dbReference type="GO" id="GO:0009089">
    <property type="term" value="P:lysine biosynthetic process via diaminopimelate"/>
    <property type="evidence" value="ECO:0007669"/>
    <property type="project" value="UniProtKB-UniRule"/>
</dbReference>
<dbReference type="CDD" id="cd03891">
    <property type="entry name" value="M20_DapE_proteobac"/>
    <property type="match status" value="1"/>
</dbReference>
<dbReference type="Gene3D" id="3.30.70.360">
    <property type="match status" value="1"/>
</dbReference>
<dbReference type="Gene3D" id="3.40.630.10">
    <property type="entry name" value="Zn peptidases"/>
    <property type="match status" value="2"/>
</dbReference>
<dbReference type="HAMAP" id="MF_01690">
    <property type="entry name" value="DapE"/>
    <property type="match status" value="1"/>
</dbReference>
<dbReference type="InterPro" id="IPR001261">
    <property type="entry name" value="ArgE/DapE_CS"/>
</dbReference>
<dbReference type="InterPro" id="IPR036264">
    <property type="entry name" value="Bact_exopeptidase_dim_dom"/>
</dbReference>
<dbReference type="InterPro" id="IPR005941">
    <property type="entry name" value="DapE_proteobac"/>
</dbReference>
<dbReference type="InterPro" id="IPR002933">
    <property type="entry name" value="Peptidase_M20"/>
</dbReference>
<dbReference type="InterPro" id="IPR011650">
    <property type="entry name" value="Peptidase_M20_dimer"/>
</dbReference>
<dbReference type="InterPro" id="IPR050072">
    <property type="entry name" value="Peptidase_M20A"/>
</dbReference>
<dbReference type="NCBIfam" id="TIGR01246">
    <property type="entry name" value="dapE_proteo"/>
    <property type="match status" value="1"/>
</dbReference>
<dbReference type="NCBIfam" id="NF009557">
    <property type="entry name" value="PRK13009.1"/>
    <property type="match status" value="1"/>
</dbReference>
<dbReference type="PANTHER" id="PTHR43808">
    <property type="entry name" value="ACETYLORNITHINE DEACETYLASE"/>
    <property type="match status" value="1"/>
</dbReference>
<dbReference type="PANTHER" id="PTHR43808:SF31">
    <property type="entry name" value="N-ACETYL-L-CITRULLINE DEACETYLASE"/>
    <property type="match status" value="1"/>
</dbReference>
<dbReference type="Pfam" id="PF07687">
    <property type="entry name" value="M20_dimer"/>
    <property type="match status" value="1"/>
</dbReference>
<dbReference type="Pfam" id="PF01546">
    <property type="entry name" value="Peptidase_M20"/>
    <property type="match status" value="1"/>
</dbReference>
<dbReference type="SUPFAM" id="SSF55031">
    <property type="entry name" value="Bacterial exopeptidase dimerisation domain"/>
    <property type="match status" value="1"/>
</dbReference>
<dbReference type="SUPFAM" id="SSF53187">
    <property type="entry name" value="Zn-dependent exopeptidases"/>
    <property type="match status" value="1"/>
</dbReference>
<dbReference type="PROSITE" id="PS00759">
    <property type="entry name" value="ARGE_DAPE_CPG2_2"/>
    <property type="match status" value="1"/>
</dbReference>
<name>DAPE_PELUB</name>
<sequence>MPTYNEITLAKELIRFPSITPIDAGVMKFLAKKLTTIGFKCKILEFKDKNSKPVKNLYARLGNTQPNFMFAGHLDVVPPGNIQDWTIKPFSPTIKKNHLIGRGANDMKSAIASWVVAVNNYVLTNKKINGSISLLITGDEEGVAINGTKKVVDYLKKKKEKIDFCLVGEPTNPNKLGEMIKIGRRGSINAELTIIGTQGHVAYPHRAKNPSTSLIKILNEIKEIKFDKGTKDFQPTNLEVTKININNTADNVIPGLARATFNIRFNNKHTSSSLKNRLNKIFKKITKKDKSNFKVEYRVSGEAFLTKPNKTTYMIQDVIKKITKIKPQLSTTGGTSDARFIRKIAPCLEFGLVGKTMHKVDEAVSISDLKKLTKIYSEILKNYF</sequence>
<accession>Q4FNF5</accession>
<gene>
    <name evidence="1" type="primary">dapE</name>
    <name type="ordered locus">SAR11_0462</name>
</gene>